<comment type="function">
    <text evidence="1">Contributes to normal sperm motility, but not essential for male fertility.</text>
</comment>
<comment type="subunit">
    <text evidence="1">Interacts with PRM2.</text>
</comment>
<comment type="subcellular location">
    <subcellularLocation>
        <location evidence="4 5">Nucleus</location>
    </subcellularLocation>
    <subcellularLocation>
        <location evidence="4 5">Cytoplasm</location>
    </subcellularLocation>
    <text evidence="5">Mainly nuclear. Also detected in cytoplasm near the midpiece of the flagellum.</text>
</comment>
<comment type="alternative products">
    <event type="alternative splicing"/>
    <isoform>
        <id>Q86YL5-1</id>
        <name>1</name>
        <name>TDRP1</name>
        <sequence type="displayed"/>
    </isoform>
    <isoform>
        <id>Q86YL5-2</id>
        <name>2</name>
        <name>TDRP2</name>
        <sequence type="described" ref="VSP_045212"/>
    </isoform>
</comment>
<comment type="tissue specificity">
    <text evidence="4">Expressed in spermatogenic cells, especially in spermatocytes (at protein level).</text>
</comment>
<comment type="polymorphism">
    <text evidence="3">The poly-Ala region seems to be polymorphic and the number of Ala varies between 4 and 6.</text>
</comment>
<comment type="similarity">
    <text evidence="7">Belongs to the TDRP family.</text>
</comment>
<feature type="chain" id="PRO_0000308219" description="Testis development-related protein">
    <location>
        <begin position="1"/>
        <end position="185"/>
    </location>
</feature>
<feature type="region of interest" description="Disordered" evidence="2">
    <location>
        <begin position="1"/>
        <end position="29"/>
    </location>
</feature>
<feature type="region of interest" description="Disordered" evidence="2">
    <location>
        <begin position="121"/>
        <end position="156"/>
    </location>
</feature>
<feature type="splice variant" id="VSP_045212" description="In isoform 2." evidence="6">
    <original>VSIRRQSKGHLTDSPEEAE</original>
    <variation>IKEVWINFSQLIISFRKHCLAHYRELRLCIKY</variation>
    <location>
        <begin position="167"/>
        <end position="185"/>
    </location>
</feature>
<organism>
    <name type="scientific">Homo sapiens</name>
    <name type="common">Human</name>
    <dbReference type="NCBI Taxonomy" id="9606"/>
    <lineage>
        <taxon>Eukaryota</taxon>
        <taxon>Metazoa</taxon>
        <taxon>Chordata</taxon>
        <taxon>Craniata</taxon>
        <taxon>Vertebrata</taxon>
        <taxon>Euteleostomi</taxon>
        <taxon>Mammalia</taxon>
        <taxon>Eutheria</taxon>
        <taxon>Euarchontoglires</taxon>
        <taxon>Primates</taxon>
        <taxon>Haplorrhini</taxon>
        <taxon>Catarrhini</taxon>
        <taxon>Hominidae</taxon>
        <taxon>Homo</taxon>
    </lineage>
</organism>
<reference key="1">
    <citation type="journal article" date="2004" name="Endocr. Relat. Cancer">
        <title>Gene expression profiling in human insulinoma tissue: genes involved in the insulin secretion pathway and cloning of novel full-length cDNAs.</title>
        <authorList>
            <person name="Wang X.-C."/>
            <person name="Xu S.-Y."/>
            <person name="Wu X.-Y."/>
            <person name="Song H.-D."/>
            <person name="Mao Y.-F."/>
            <person name="Fan H.-Y."/>
            <person name="Yu F."/>
            <person name="Mou B."/>
            <person name="Gu Y.-Y."/>
            <person name="Xu L.-Q."/>
            <person name="Zhou X.-O."/>
            <person name="Chen Z."/>
            <person name="Chen J.-L."/>
            <person name="Hu R.-M."/>
        </authorList>
    </citation>
    <scope>NUCLEOTIDE SEQUENCE [MRNA] (ISOFORM 1)</scope>
    <scope>POLYMORPHISM OF POLY-ALA REGION</scope>
</reference>
<reference key="2">
    <citation type="submission" date="2008-10" db="EMBL/GenBank/DDBJ databases">
        <authorList>
            <person name="Wang X.-C."/>
            <person name="Hu R.-M."/>
            <person name="Song H.-D."/>
            <person name="Xu S.Y."/>
            <person name="Wu X.-Y."/>
            <person name="Fan H.-Y."/>
            <person name="Chen Z."/>
        </authorList>
    </citation>
    <scope>SEQUENCE REVISION</scope>
</reference>
<reference key="3">
    <citation type="journal article" date="2010" name="Biochem. Biophys. Res. Commun.">
        <title>Molecular cloning of a novel nuclear factor, TDRP1, in spermatogenic cells of testis and its relationship with spermatogenesis.</title>
        <authorList>
            <person name="Wang X."/>
            <person name="Jiang H."/>
            <person name="Zhou W."/>
            <person name="Zhang Z."/>
            <person name="Yang Z."/>
            <person name="Lu Y."/>
            <person name="Lu B."/>
            <person name="Wang X."/>
            <person name="Ding Q."/>
            <person name="Hu R."/>
        </authorList>
    </citation>
    <scope>NUCLEOTIDE SEQUENCE [MRNA] (ISOFORM 2)</scope>
    <scope>SUBCELLULAR LOCATION</scope>
    <scope>TISSUE SPECIFICITY</scope>
</reference>
<reference key="4">
    <citation type="journal article" date="2006" name="Nature">
        <title>DNA sequence and analysis of human chromosome 8.</title>
        <authorList>
            <person name="Nusbaum C."/>
            <person name="Mikkelsen T.S."/>
            <person name="Zody M.C."/>
            <person name="Asakawa S."/>
            <person name="Taudien S."/>
            <person name="Garber M."/>
            <person name="Kodira C.D."/>
            <person name="Schueler M.G."/>
            <person name="Shimizu A."/>
            <person name="Whittaker C.A."/>
            <person name="Chang J.L."/>
            <person name="Cuomo C.A."/>
            <person name="Dewar K."/>
            <person name="FitzGerald M.G."/>
            <person name="Yang X."/>
            <person name="Allen N.R."/>
            <person name="Anderson S."/>
            <person name="Asakawa T."/>
            <person name="Blechschmidt K."/>
            <person name="Bloom T."/>
            <person name="Borowsky M.L."/>
            <person name="Butler J."/>
            <person name="Cook A."/>
            <person name="Corum B."/>
            <person name="DeArellano K."/>
            <person name="DeCaprio D."/>
            <person name="Dooley K.T."/>
            <person name="Dorris L. III"/>
            <person name="Engels R."/>
            <person name="Gloeckner G."/>
            <person name="Hafez N."/>
            <person name="Hagopian D.S."/>
            <person name="Hall J.L."/>
            <person name="Ishikawa S.K."/>
            <person name="Jaffe D.B."/>
            <person name="Kamat A."/>
            <person name="Kudoh J."/>
            <person name="Lehmann R."/>
            <person name="Lokitsang T."/>
            <person name="Macdonald P."/>
            <person name="Major J.E."/>
            <person name="Matthews C.D."/>
            <person name="Mauceli E."/>
            <person name="Menzel U."/>
            <person name="Mihalev A.H."/>
            <person name="Minoshima S."/>
            <person name="Murayama Y."/>
            <person name="Naylor J.W."/>
            <person name="Nicol R."/>
            <person name="Nguyen C."/>
            <person name="O'Leary S.B."/>
            <person name="O'Neill K."/>
            <person name="Parker S.C.J."/>
            <person name="Polley A."/>
            <person name="Raymond C.K."/>
            <person name="Reichwald K."/>
            <person name="Rodriguez J."/>
            <person name="Sasaki T."/>
            <person name="Schilhabel M."/>
            <person name="Siddiqui R."/>
            <person name="Smith C.L."/>
            <person name="Sneddon T.P."/>
            <person name="Talamas J.A."/>
            <person name="Tenzin P."/>
            <person name="Topham K."/>
            <person name="Venkataraman V."/>
            <person name="Wen G."/>
            <person name="Yamazaki S."/>
            <person name="Young S.K."/>
            <person name="Zeng Q."/>
            <person name="Zimmer A.R."/>
            <person name="Rosenthal A."/>
            <person name="Birren B.W."/>
            <person name="Platzer M."/>
            <person name="Shimizu N."/>
            <person name="Lander E.S."/>
        </authorList>
    </citation>
    <scope>NUCLEOTIDE SEQUENCE [LARGE SCALE GENOMIC DNA]</scope>
</reference>
<reference key="5">
    <citation type="journal article" date="2004" name="Genome Res.">
        <title>The status, quality, and expansion of the NIH full-length cDNA project: the Mammalian Gene Collection (MGC).</title>
        <authorList>
            <consortium name="The MGC Project Team"/>
        </authorList>
    </citation>
    <scope>NUCLEOTIDE SEQUENCE [LARGE SCALE MRNA] (ISOFORM 1)</scope>
    <scope>POLYMORPHISM OF POLY-ALA REGION</scope>
    <source>
        <tissue>Brain</tissue>
        <tissue>Testis</tissue>
    </source>
</reference>
<reference key="6">
    <citation type="journal article" date="2016" name="Am. J. Transl. Res.">
        <title>TDRP deficiency contributes to low sperm motility and is a potential risk factor for male infertility.</title>
        <authorList>
            <person name="Mao S."/>
            <person name="Wu F."/>
            <person name="Cao X."/>
            <person name="He M."/>
            <person name="Liu N."/>
            <person name="Wu H."/>
            <person name="Yang Z."/>
            <person name="Ding Q."/>
            <person name="Wang X."/>
        </authorList>
    </citation>
    <scope>SUBCELLULAR LOCATION</scope>
</reference>
<gene>
    <name type="primary">TDRP</name>
    <name type="synonym">C8orf42</name>
</gene>
<name>TDRP_HUMAN</name>
<dbReference type="EMBL" id="AY194292">
    <property type="protein sequence ID" value="AAO23974.2"/>
    <property type="molecule type" value="mRNA"/>
</dbReference>
<dbReference type="EMBL" id="FJ381685">
    <property type="protein sequence ID" value="ACJ10204.1"/>
    <property type="molecule type" value="mRNA"/>
</dbReference>
<dbReference type="EMBL" id="AC083964">
    <property type="status" value="NOT_ANNOTATED_CDS"/>
    <property type="molecule type" value="Genomic_DNA"/>
</dbReference>
<dbReference type="EMBL" id="AC090135">
    <property type="status" value="NOT_ANNOTATED_CDS"/>
    <property type="molecule type" value="Genomic_DNA"/>
</dbReference>
<dbReference type="EMBL" id="AC090691">
    <property type="status" value="NOT_ANNOTATED_CDS"/>
    <property type="molecule type" value="Genomic_DNA"/>
</dbReference>
<dbReference type="EMBL" id="BC136248">
    <property type="protein sequence ID" value="AAI36249.1"/>
    <property type="molecule type" value="mRNA"/>
</dbReference>
<dbReference type="EMBL" id="BC136249">
    <property type="protein sequence ID" value="AAI36250.1"/>
    <property type="molecule type" value="mRNA"/>
</dbReference>
<dbReference type="CCDS" id="CCDS47759.1">
    <molecule id="Q86YL5-1"/>
</dbReference>
<dbReference type="CCDS" id="CCDS59090.1">
    <molecule id="Q86YL5-2"/>
</dbReference>
<dbReference type="RefSeq" id="NP_001243042.1">
    <molecule id="Q86YL5-2"/>
    <property type="nucleotide sequence ID" value="NM_001256113.2"/>
</dbReference>
<dbReference type="RefSeq" id="NP_001371828.1">
    <molecule id="Q86YL5-1"/>
    <property type="nucleotide sequence ID" value="NM_001384899.1"/>
</dbReference>
<dbReference type="RefSeq" id="NP_778250.2">
    <molecule id="Q86YL5-1"/>
    <property type="nucleotide sequence ID" value="NM_175075.5"/>
</dbReference>
<dbReference type="RefSeq" id="XP_006716295.1">
    <property type="nucleotide sequence ID" value="XM_006716232.3"/>
</dbReference>
<dbReference type="BioGRID" id="127614">
    <property type="interactions" value="6"/>
</dbReference>
<dbReference type="FunCoup" id="Q86YL5">
    <property type="interactions" value="1411"/>
</dbReference>
<dbReference type="STRING" id="9606.ENSP00000430325"/>
<dbReference type="iPTMnet" id="Q86YL5"/>
<dbReference type="PhosphoSitePlus" id="Q86YL5"/>
<dbReference type="BioMuta" id="TDRP"/>
<dbReference type="jPOST" id="Q86YL5"/>
<dbReference type="MassIVE" id="Q86YL5"/>
<dbReference type="PaxDb" id="9606-ENSP00000430325"/>
<dbReference type="PeptideAtlas" id="Q86YL5"/>
<dbReference type="ProteomicsDB" id="6251"/>
<dbReference type="ProteomicsDB" id="70428">
    <molecule id="Q86YL5-1"/>
</dbReference>
<dbReference type="Pumba" id="Q86YL5"/>
<dbReference type="Antibodypedia" id="2036">
    <property type="antibodies" value="49 antibodies from 12 providers"/>
</dbReference>
<dbReference type="DNASU" id="157695"/>
<dbReference type="Ensembl" id="ENST00000324079.11">
    <molecule id="Q86YL5-1"/>
    <property type="protein sequence ID" value="ENSP00000315111.6"/>
    <property type="gene ID" value="ENSG00000180190.13"/>
</dbReference>
<dbReference type="Ensembl" id="ENST00000523656.5">
    <molecule id="Q86YL5-2"/>
    <property type="protein sequence ID" value="ENSP00000430325.1"/>
    <property type="gene ID" value="ENSG00000180190.13"/>
</dbReference>
<dbReference type="GeneID" id="157695"/>
<dbReference type="KEGG" id="hsa:157695"/>
<dbReference type="MANE-Select" id="ENST00000324079.11">
    <property type="protein sequence ID" value="ENSP00000315111.6"/>
    <property type="RefSeq nucleotide sequence ID" value="NM_001384899.1"/>
    <property type="RefSeq protein sequence ID" value="NP_001371828.1"/>
</dbReference>
<dbReference type="UCSC" id="uc011kwg.3">
    <molecule id="Q86YL5-1"/>
    <property type="organism name" value="human"/>
</dbReference>
<dbReference type="AGR" id="HGNC:26951"/>
<dbReference type="CTD" id="157695"/>
<dbReference type="DisGeNET" id="157695"/>
<dbReference type="GeneCards" id="TDRP"/>
<dbReference type="HGNC" id="HGNC:26951">
    <property type="gene designation" value="TDRP"/>
</dbReference>
<dbReference type="HPA" id="ENSG00000180190">
    <property type="expression patterns" value="Low tissue specificity"/>
</dbReference>
<dbReference type="MIM" id="619049">
    <property type="type" value="gene"/>
</dbReference>
<dbReference type="neXtProt" id="NX_Q86YL5"/>
<dbReference type="OpenTargets" id="ENSG00000180190"/>
<dbReference type="PharmGKB" id="PA142672361"/>
<dbReference type="VEuPathDB" id="HostDB:ENSG00000180190"/>
<dbReference type="eggNOG" id="ENOG502RYNW">
    <property type="taxonomic scope" value="Eukaryota"/>
</dbReference>
<dbReference type="GeneTree" id="ENSGT00390000017888"/>
<dbReference type="HOGENOM" id="CLU_094260_0_0_1"/>
<dbReference type="InParanoid" id="Q86YL5"/>
<dbReference type="OMA" id="KGHCFWD"/>
<dbReference type="OrthoDB" id="9634112at2759"/>
<dbReference type="PAN-GO" id="Q86YL5">
    <property type="GO annotations" value="3 GO annotations based on evolutionary models"/>
</dbReference>
<dbReference type="PhylomeDB" id="Q86YL5"/>
<dbReference type="TreeFam" id="TF335521"/>
<dbReference type="PathwayCommons" id="Q86YL5"/>
<dbReference type="BioGRID-ORCS" id="157695">
    <property type="hits" value="14 hits in 1117 CRISPR screens"/>
</dbReference>
<dbReference type="ChiTaRS" id="TDRP">
    <property type="organism name" value="human"/>
</dbReference>
<dbReference type="GenomeRNAi" id="157695"/>
<dbReference type="Pharos" id="Q86YL5">
    <property type="development level" value="Tbio"/>
</dbReference>
<dbReference type="PRO" id="PR:Q86YL5"/>
<dbReference type="Proteomes" id="UP000005640">
    <property type="component" value="Chromosome 8"/>
</dbReference>
<dbReference type="RNAct" id="Q86YL5">
    <property type="molecule type" value="protein"/>
</dbReference>
<dbReference type="Bgee" id="ENSG00000180190">
    <property type="expression patterns" value="Expressed in secondary oocyte and 167 other cell types or tissues"/>
</dbReference>
<dbReference type="GO" id="GO:0005737">
    <property type="term" value="C:cytoplasm"/>
    <property type="evidence" value="ECO:0000314"/>
    <property type="project" value="UniProtKB"/>
</dbReference>
<dbReference type="GO" id="GO:0005829">
    <property type="term" value="C:cytosol"/>
    <property type="evidence" value="ECO:0000314"/>
    <property type="project" value="HPA"/>
</dbReference>
<dbReference type="GO" id="GO:0043231">
    <property type="term" value="C:intracellular membrane-bounded organelle"/>
    <property type="evidence" value="ECO:0000314"/>
    <property type="project" value="HPA"/>
</dbReference>
<dbReference type="GO" id="GO:0005739">
    <property type="term" value="C:mitochondrion"/>
    <property type="evidence" value="ECO:0006056"/>
    <property type="project" value="FlyBase"/>
</dbReference>
<dbReference type="GO" id="GO:0005634">
    <property type="term" value="C:nucleus"/>
    <property type="evidence" value="ECO:0000314"/>
    <property type="project" value="UniProtKB"/>
</dbReference>
<dbReference type="GO" id="GO:0007283">
    <property type="term" value="P:spermatogenesis"/>
    <property type="evidence" value="ECO:0000314"/>
    <property type="project" value="MGI"/>
</dbReference>
<dbReference type="InterPro" id="IPR031399">
    <property type="entry name" value="TDRP"/>
</dbReference>
<dbReference type="PANTHER" id="PTHR35663:SF1">
    <property type="entry name" value="TESTIS DEVELOPMENT-RELATED PROTEIN"/>
    <property type="match status" value="1"/>
</dbReference>
<dbReference type="PANTHER" id="PTHR35663">
    <property type="entry name" value="TESTIS DEVELOPMENT-RELATED PROTEIN-RELATED"/>
    <property type="match status" value="1"/>
</dbReference>
<dbReference type="Pfam" id="PF15683">
    <property type="entry name" value="TDRP"/>
    <property type="match status" value="1"/>
</dbReference>
<protein>
    <recommendedName>
        <fullName>Testis development-related protein</fullName>
    </recommendedName>
    <alternativeName>
        <fullName>Protein INM01</fullName>
    </alternativeName>
</protein>
<evidence type="ECO:0000250" key="1">
    <source>
        <dbReference type="UniProtKB" id="Q8C5P7"/>
    </source>
</evidence>
<evidence type="ECO:0000256" key="2">
    <source>
        <dbReference type="SAM" id="MobiDB-lite"/>
    </source>
</evidence>
<evidence type="ECO:0000269" key="3">
    <source>
    </source>
</evidence>
<evidence type="ECO:0000269" key="4">
    <source>
    </source>
</evidence>
<evidence type="ECO:0000269" key="5">
    <source>
    </source>
</evidence>
<evidence type="ECO:0000303" key="6">
    <source>
    </source>
</evidence>
<evidence type="ECO:0000305" key="7"/>
<proteinExistence type="evidence at protein level"/>
<accession>Q86YL5</accession>
<accession>B6VF03</accession>
<accession>B9EG53</accession>
<sequence>MWKLGRGRVLLDEPPEEEDGLRGGPPPAAAAAAQAQVQGASFRGWKEVTSLFNKDDEQHLLERCKSPKSKGTNLRLKEELKAEKKSGFWDNLVLKQNIQSKKPDEIEGWEPPKLALEDISADPEDTVGGHPSWSGWEDDAKGSTKYTSLASSANSSRWSLRAAGRLVSIRRQSKGHLTDSPEEAE</sequence>
<keyword id="KW-0025">Alternative splicing</keyword>
<keyword id="KW-0963">Cytoplasm</keyword>
<keyword id="KW-0539">Nucleus</keyword>
<keyword id="KW-1267">Proteomics identification</keyword>
<keyword id="KW-1185">Reference proteome</keyword>